<keyword id="KW-0963">Cytoplasm</keyword>
<keyword id="KW-0449">Lipoprotein</keyword>
<keyword id="KW-0472">Membrane</keyword>
<keyword id="KW-0519">Myristate</keyword>
<keyword id="KW-1185">Reference proteome</keyword>
<organism>
    <name type="scientific">Gallus gallus</name>
    <name type="common">Chicken</name>
    <dbReference type="NCBI Taxonomy" id="9031"/>
    <lineage>
        <taxon>Eukaryota</taxon>
        <taxon>Metazoa</taxon>
        <taxon>Chordata</taxon>
        <taxon>Craniata</taxon>
        <taxon>Vertebrata</taxon>
        <taxon>Euteleostomi</taxon>
        <taxon>Archelosauria</taxon>
        <taxon>Archosauria</taxon>
        <taxon>Dinosauria</taxon>
        <taxon>Saurischia</taxon>
        <taxon>Theropoda</taxon>
        <taxon>Coelurosauria</taxon>
        <taxon>Aves</taxon>
        <taxon>Neognathae</taxon>
        <taxon>Galloanserae</taxon>
        <taxon>Galliformes</taxon>
        <taxon>Phasianidae</taxon>
        <taxon>Phasianinae</taxon>
        <taxon>Gallus</taxon>
    </lineage>
</organism>
<protein>
    <recommendedName>
        <fullName>Protein-L-isoaspartate O-methyltransferase domain-containing protein 1</fullName>
    </recommendedName>
</protein>
<proteinExistence type="evidence at transcript level"/>
<sequence>MGGAVSAGEDNDDLIDNLKEAQYIRTESVEQAFRAIDRGDYYLEGYRDNAYKDLAWKHGNIHLSAPCIYSEVMEALKLQPGLSFLNLGSGTGYLSTMVGLILGPFGINHGIELHSDVVEYAKEKLESFIKYSDSFDKFEFCEPAFVVGNCLEIASDSHQYDRIYCGAGVQKDHENYMKILLKVGGILVMPIEDQLTQILRTGQNTWESKNILAVSFAPLVQPNRNDNGKHDTVGLPPCAVRNLQDLARIYIRRTLRNFINEEMKAKGIAQKAPPKRKRRRCRRRRINTYVFVGNQLIPQPLDSEEDERMEDDNKEEEDKDHSEALKPEEPPRNLLREKIMSLPLPESLKAYLTYYREK</sequence>
<accession>Q5ZMR3</accession>
<comment type="function">
    <text evidence="3">Substrate recognition component of an ECS (Elongin BC-CUL5-SOCS-box protein) E3 ubiquitin ligase complex which mediates the ubiquitination and subsequent proteasomal degradation of target proteins. Specifically binds to the methyltransferase cofactor S-adenosylmethionine (AdoMet) via the N-terminal AdoMet binding motif, but does not display methyltransferase activity. May provide an alternate maintenance pathway for modified proteins by acting as a damage-specific E3 ubiquitin ligase adaptor protein.</text>
</comment>
<comment type="subunit">
    <text evidence="3">Component of the probable ECS(PCMTD1) E3 ubiquitin-protein ligase complex, at least composed of CUL5, ELOB, ELOC, RBX2 and PCMTD1.</text>
</comment>
<comment type="subcellular location">
    <subcellularLocation>
        <location evidence="1">Cytoplasm</location>
    </subcellularLocation>
    <subcellularLocation>
        <location evidence="3">Membrane</location>
        <topology evidence="3">Lipid-anchor</topology>
    </subcellularLocation>
</comment>
<comment type="domain">
    <text evidence="3">At its N-terminus, contains L-isoaspartate and S-adenosylmethionine (AdoMet) binding motifs. Also contains an extended SOCS box motif, where the Cul-box is separated from the BC-box by ~90 residues, within its C-terminus.</text>
</comment>
<comment type="similarity">
    <text evidence="6">Belongs to the methyltransferase superfamily. L-isoaspartyl/D-aspartyl protein methyltransferase family.</text>
</comment>
<comment type="caution">
    <text evidence="3">Although the active site residue Ser is conserved, appears to lack catalytic activity in vitro.</text>
</comment>
<evidence type="ECO:0000250" key="1">
    <source>
        <dbReference type="UniProtKB" id="P22061"/>
    </source>
</evidence>
<evidence type="ECO:0000250" key="2">
    <source>
        <dbReference type="UniProtKB" id="Q27869"/>
    </source>
</evidence>
<evidence type="ECO:0000250" key="3">
    <source>
        <dbReference type="UniProtKB" id="Q96MG8"/>
    </source>
</evidence>
<evidence type="ECO:0000255" key="4"/>
<evidence type="ECO:0000256" key="5">
    <source>
        <dbReference type="SAM" id="MobiDB-lite"/>
    </source>
</evidence>
<evidence type="ECO:0000305" key="6"/>
<name>PCMD1_CHICK</name>
<reference key="1">
    <citation type="journal article" date="2005" name="BMC Genomics">
        <title>Characterization of 954 bovine full-CDS cDNA sequences.</title>
        <authorList>
            <person name="Harhay G.P."/>
            <person name="Sonstegard T.S."/>
            <person name="Keele J.W."/>
            <person name="Heaton M.P."/>
            <person name="Clawson M.L."/>
            <person name="Snelling W.M."/>
            <person name="Wiedmann R.T."/>
            <person name="Van Tassell C.P."/>
            <person name="Smith T.P.L."/>
        </authorList>
    </citation>
    <scope>NUCLEOTIDE SEQUENCE [LARGE SCALE MRNA]</scope>
    <source>
        <strain>CB</strain>
        <tissue>Bursa of Fabricius</tissue>
    </source>
</reference>
<dbReference type="EMBL" id="AJ719321">
    <property type="protein sequence ID" value="CAG30980.1"/>
    <property type="molecule type" value="mRNA"/>
</dbReference>
<dbReference type="RefSeq" id="NP_001026190.1">
    <property type="nucleotide sequence ID" value="NM_001031019.2"/>
</dbReference>
<dbReference type="RefSeq" id="XP_015138079.1">
    <property type="nucleotide sequence ID" value="XM_015282593.4"/>
</dbReference>
<dbReference type="RefSeq" id="XP_015138080.1">
    <property type="nucleotide sequence ID" value="XM_015282594.4"/>
</dbReference>
<dbReference type="RefSeq" id="XP_040541305.1">
    <property type="nucleotide sequence ID" value="XM_040685371.2"/>
</dbReference>
<dbReference type="RefSeq" id="XP_040541313.1">
    <property type="nucleotide sequence ID" value="XM_040685379.2"/>
</dbReference>
<dbReference type="RefSeq" id="XP_040541322.1">
    <property type="nucleotide sequence ID" value="XM_040685388.2"/>
</dbReference>
<dbReference type="RefSeq" id="XP_046767526.1">
    <property type="nucleotide sequence ID" value="XM_046911570.1"/>
</dbReference>
<dbReference type="RefSeq" id="XP_046767527.1">
    <property type="nucleotide sequence ID" value="XM_046911571.1"/>
</dbReference>
<dbReference type="RefSeq" id="XP_046767528.1">
    <property type="nucleotide sequence ID" value="XM_046911572.1"/>
</dbReference>
<dbReference type="RefSeq" id="XP_046767529.1">
    <property type="nucleotide sequence ID" value="XM_046911573.1"/>
</dbReference>
<dbReference type="RefSeq" id="XP_046767530.1">
    <property type="nucleotide sequence ID" value="XM_046911574.1"/>
</dbReference>
<dbReference type="RefSeq" id="XP_046767531.1">
    <property type="nucleotide sequence ID" value="XM_046911575.1"/>
</dbReference>
<dbReference type="RefSeq" id="XP_046767532.1">
    <property type="nucleotide sequence ID" value="XM_046911576.1"/>
</dbReference>
<dbReference type="RefSeq" id="XP_046781257.1">
    <property type="nucleotide sequence ID" value="XM_046925301.1"/>
</dbReference>
<dbReference type="RefSeq" id="XP_046781259.1">
    <property type="nucleotide sequence ID" value="XM_046925303.1"/>
</dbReference>
<dbReference type="SMR" id="Q5ZMR3"/>
<dbReference type="FunCoup" id="Q5ZMR3">
    <property type="interactions" value="560"/>
</dbReference>
<dbReference type="STRING" id="9031.ENSGALP00000073517"/>
<dbReference type="PaxDb" id="9031-ENSGALP00000024559"/>
<dbReference type="Ensembl" id="ENSGALT00010009550.1">
    <property type="protein sequence ID" value="ENSGALP00010005618.1"/>
    <property type="gene ID" value="ENSGALG00010004102.1"/>
</dbReference>
<dbReference type="GeneID" id="421114"/>
<dbReference type="KEGG" id="gga:421114"/>
<dbReference type="CTD" id="115294"/>
<dbReference type="VEuPathDB" id="HostDB:geneid_421114"/>
<dbReference type="eggNOG" id="KOG1661">
    <property type="taxonomic scope" value="Eukaryota"/>
</dbReference>
<dbReference type="GeneTree" id="ENSGT00950000183032"/>
<dbReference type="HOGENOM" id="CLU_029295_0_0_1"/>
<dbReference type="InParanoid" id="Q5ZMR3"/>
<dbReference type="OMA" id="QSTWDSR"/>
<dbReference type="OrthoDB" id="10257972at2759"/>
<dbReference type="PhylomeDB" id="Q5ZMR3"/>
<dbReference type="TreeFam" id="TF329329"/>
<dbReference type="PRO" id="PR:Q5ZMR3"/>
<dbReference type="Proteomes" id="UP000000539">
    <property type="component" value="Chromosome 2"/>
</dbReference>
<dbReference type="Bgee" id="ENSGALG00000031035">
    <property type="expression patterns" value="Expressed in spleen and 13 other cell types or tissues"/>
</dbReference>
<dbReference type="GO" id="GO:0031466">
    <property type="term" value="C:Cul5-RING ubiquitin ligase complex"/>
    <property type="evidence" value="ECO:0000250"/>
    <property type="project" value="UniProtKB"/>
</dbReference>
<dbReference type="GO" id="GO:0005737">
    <property type="term" value="C:cytoplasm"/>
    <property type="evidence" value="ECO:0000318"/>
    <property type="project" value="GO_Central"/>
</dbReference>
<dbReference type="GO" id="GO:0016020">
    <property type="term" value="C:membrane"/>
    <property type="evidence" value="ECO:0007669"/>
    <property type="project" value="UniProtKB-SubCell"/>
</dbReference>
<dbReference type="GO" id="GO:0004719">
    <property type="term" value="F:protein-L-isoaspartate (D-aspartate) O-methyltransferase activity"/>
    <property type="evidence" value="ECO:0000318"/>
    <property type="project" value="GO_Central"/>
</dbReference>
<dbReference type="GO" id="GO:1990756">
    <property type="term" value="F:ubiquitin-like ligase-substrate adaptor activity"/>
    <property type="evidence" value="ECO:0000250"/>
    <property type="project" value="UniProtKB"/>
</dbReference>
<dbReference type="GO" id="GO:0016567">
    <property type="term" value="P:protein ubiquitination"/>
    <property type="evidence" value="ECO:0000250"/>
    <property type="project" value="UniProtKB"/>
</dbReference>
<dbReference type="FunFam" id="3.40.50.150:FF:000015">
    <property type="entry name" value="Protein-L-isoaspartate (D-aspartate) O-methyltransferase domain-containing 1"/>
    <property type="match status" value="1"/>
</dbReference>
<dbReference type="Gene3D" id="3.40.50.150">
    <property type="entry name" value="Vaccinia Virus protein VP39"/>
    <property type="match status" value="1"/>
</dbReference>
<dbReference type="InterPro" id="IPR000682">
    <property type="entry name" value="PCMT"/>
</dbReference>
<dbReference type="InterPro" id="IPR029063">
    <property type="entry name" value="SAM-dependent_MTases_sf"/>
</dbReference>
<dbReference type="PANTHER" id="PTHR11579">
    <property type="entry name" value="PROTEIN-L-ISOASPARTATE O-METHYLTRANSFERASE"/>
    <property type="match status" value="1"/>
</dbReference>
<dbReference type="PANTHER" id="PTHR11579:SF4">
    <property type="entry name" value="PROTEIN-L-ISOASPARTATE O-METHYLTRANSFERASE DOMAIN-CONTAINING PROTEIN 1"/>
    <property type="match status" value="1"/>
</dbReference>
<dbReference type="Pfam" id="PF01135">
    <property type="entry name" value="PCMT"/>
    <property type="match status" value="1"/>
</dbReference>
<dbReference type="SUPFAM" id="SSF53335">
    <property type="entry name" value="S-adenosyl-L-methionine-dependent methyltransferases"/>
    <property type="match status" value="1"/>
</dbReference>
<gene>
    <name type="primary">PCMTD1</name>
    <name type="ORF">RCJMB04_1g9</name>
</gene>
<feature type="initiator methionine" description="Removed" evidence="4">
    <location>
        <position position="1"/>
    </location>
</feature>
<feature type="chain" id="PRO_0000293541" description="Protein-L-isoaspartate O-methyltransferase domain-containing protein 1">
    <location>
        <begin position="2"/>
        <end position="358"/>
    </location>
</feature>
<feature type="region of interest" description="AdoMet binding motif" evidence="3">
    <location>
        <begin position="85"/>
        <end position="94"/>
    </location>
</feature>
<feature type="region of interest" description="AdoMet binding motif" evidence="3">
    <location>
        <begin position="160"/>
        <end position="164"/>
    </location>
</feature>
<feature type="region of interest" description="AdoMet binding motif" evidence="3">
    <location>
        <begin position="181"/>
        <end position="191"/>
    </location>
</feature>
<feature type="region of interest" description="BC-box" evidence="3">
    <location>
        <begin position="240"/>
        <end position="250"/>
    </location>
</feature>
<feature type="region of interest" description="Disordered" evidence="5">
    <location>
        <begin position="300"/>
        <end position="339"/>
    </location>
</feature>
<feature type="region of interest" description="CUL-box" evidence="3">
    <location>
        <begin position="342"/>
        <end position="345"/>
    </location>
</feature>
<feature type="compositionally biased region" description="Acidic residues" evidence="5">
    <location>
        <begin position="302"/>
        <end position="318"/>
    </location>
</feature>
<feature type="compositionally biased region" description="Basic and acidic residues" evidence="5">
    <location>
        <begin position="319"/>
        <end position="339"/>
    </location>
</feature>
<feature type="active site" evidence="2">
    <location>
        <position position="64"/>
    </location>
</feature>
<feature type="lipid moiety-binding region" description="N-myristoyl glycine" evidence="4">
    <location>
        <position position="2"/>
    </location>
</feature>